<dbReference type="EC" id="4.3.2.10" evidence="1"/>
<dbReference type="EC" id="3.5.1.2" evidence="1"/>
<dbReference type="EMBL" id="FM177140">
    <property type="protein sequence ID" value="CAQ66734.1"/>
    <property type="molecule type" value="Genomic_DNA"/>
</dbReference>
<dbReference type="SMR" id="B3WED3"/>
<dbReference type="MEROPS" id="C26.965"/>
<dbReference type="KEGG" id="lcb:LCABL_16530"/>
<dbReference type="HOGENOM" id="CLU_071837_2_2_9"/>
<dbReference type="UniPathway" id="UPA00031">
    <property type="reaction ID" value="UER00010"/>
</dbReference>
<dbReference type="GO" id="GO:0005737">
    <property type="term" value="C:cytoplasm"/>
    <property type="evidence" value="ECO:0007669"/>
    <property type="project" value="UniProtKB-SubCell"/>
</dbReference>
<dbReference type="GO" id="GO:0004359">
    <property type="term" value="F:glutaminase activity"/>
    <property type="evidence" value="ECO:0007669"/>
    <property type="project" value="UniProtKB-EC"/>
</dbReference>
<dbReference type="GO" id="GO:0000107">
    <property type="term" value="F:imidazoleglycerol-phosphate synthase activity"/>
    <property type="evidence" value="ECO:0007669"/>
    <property type="project" value="UniProtKB-UniRule"/>
</dbReference>
<dbReference type="GO" id="GO:0016829">
    <property type="term" value="F:lyase activity"/>
    <property type="evidence" value="ECO:0007669"/>
    <property type="project" value="UniProtKB-KW"/>
</dbReference>
<dbReference type="GO" id="GO:0000105">
    <property type="term" value="P:L-histidine biosynthetic process"/>
    <property type="evidence" value="ECO:0007669"/>
    <property type="project" value="UniProtKB-UniRule"/>
</dbReference>
<dbReference type="CDD" id="cd01748">
    <property type="entry name" value="GATase1_IGP_Synthase"/>
    <property type="match status" value="1"/>
</dbReference>
<dbReference type="Gene3D" id="3.40.50.880">
    <property type="match status" value="1"/>
</dbReference>
<dbReference type="HAMAP" id="MF_00278">
    <property type="entry name" value="HisH"/>
    <property type="match status" value="1"/>
</dbReference>
<dbReference type="InterPro" id="IPR029062">
    <property type="entry name" value="Class_I_gatase-like"/>
</dbReference>
<dbReference type="InterPro" id="IPR017926">
    <property type="entry name" value="GATASE"/>
</dbReference>
<dbReference type="InterPro" id="IPR010139">
    <property type="entry name" value="Imidazole-glycPsynth_HisH"/>
</dbReference>
<dbReference type="NCBIfam" id="TIGR01855">
    <property type="entry name" value="IMP_synth_hisH"/>
    <property type="match status" value="1"/>
</dbReference>
<dbReference type="PANTHER" id="PTHR42701">
    <property type="entry name" value="IMIDAZOLE GLYCEROL PHOSPHATE SYNTHASE SUBUNIT HISH"/>
    <property type="match status" value="1"/>
</dbReference>
<dbReference type="PANTHER" id="PTHR42701:SF1">
    <property type="entry name" value="IMIDAZOLE GLYCEROL PHOSPHATE SYNTHASE SUBUNIT HISH"/>
    <property type="match status" value="1"/>
</dbReference>
<dbReference type="Pfam" id="PF00117">
    <property type="entry name" value="GATase"/>
    <property type="match status" value="1"/>
</dbReference>
<dbReference type="PIRSF" id="PIRSF000495">
    <property type="entry name" value="Amidotransf_hisH"/>
    <property type="match status" value="1"/>
</dbReference>
<dbReference type="SUPFAM" id="SSF52317">
    <property type="entry name" value="Class I glutamine amidotransferase-like"/>
    <property type="match status" value="1"/>
</dbReference>
<dbReference type="PROSITE" id="PS51273">
    <property type="entry name" value="GATASE_TYPE_1"/>
    <property type="match status" value="1"/>
</dbReference>
<evidence type="ECO:0000255" key="1">
    <source>
        <dbReference type="HAMAP-Rule" id="MF_00278"/>
    </source>
</evidence>
<reference key="1">
    <citation type="submission" date="2008-06" db="EMBL/GenBank/DDBJ databases">
        <title>Lactobacillus casei BL23 complete genome sequence.</title>
        <authorList>
            <person name="Maze A."/>
            <person name="Boel G."/>
            <person name="Bourand A."/>
            <person name="Loux V."/>
            <person name="Gibrat J.F."/>
            <person name="Zuniga M."/>
            <person name="Hartke A."/>
            <person name="Deutscher J."/>
        </authorList>
    </citation>
    <scope>NUCLEOTIDE SEQUENCE [LARGE SCALE GENOMIC DNA]</scope>
    <source>
        <strain>BL23</strain>
    </source>
</reference>
<sequence length="208" mass="22323">MIVIVDYDTGNTRNVKKALDYLGVNNQLSADPAIIMAASGLILPGVGAFKEAMKALNQRQLVPVIQAFAATGKPLLGICLGMQLLFDRSFEFGETAGLGLIPGEVVAIPTDSGLAVPHMGWNTNSLTQPDLFAAVFADQATYFVHSFYATTLPQFTLATTDYGQPLTSIVRRNNVLGTQFHPEKSGAIGLAGLKKFKEMTEDEALSRD</sequence>
<accession>B3WED3</accession>
<organism>
    <name type="scientific">Lacticaseibacillus casei (strain BL23)</name>
    <name type="common">Lactobacillus casei</name>
    <dbReference type="NCBI Taxonomy" id="543734"/>
    <lineage>
        <taxon>Bacteria</taxon>
        <taxon>Bacillati</taxon>
        <taxon>Bacillota</taxon>
        <taxon>Bacilli</taxon>
        <taxon>Lactobacillales</taxon>
        <taxon>Lactobacillaceae</taxon>
        <taxon>Lacticaseibacillus</taxon>
    </lineage>
</organism>
<proteinExistence type="inferred from homology"/>
<name>HIS5_LACCB</name>
<comment type="function">
    <text evidence="1">IGPS catalyzes the conversion of PRFAR and glutamine to IGP, AICAR and glutamate. The HisH subunit catalyzes the hydrolysis of glutamine to glutamate and ammonia as part of the synthesis of IGP and AICAR. The resulting ammonia molecule is channeled to the active site of HisF.</text>
</comment>
<comment type="catalytic activity">
    <reaction evidence="1">
        <text>5-[(5-phospho-1-deoxy-D-ribulos-1-ylimino)methylamino]-1-(5-phospho-beta-D-ribosyl)imidazole-4-carboxamide + L-glutamine = D-erythro-1-(imidazol-4-yl)glycerol 3-phosphate + 5-amino-1-(5-phospho-beta-D-ribosyl)imidazole-4-carboxamide + L-glutamate + H(+)</text>
        <dbReference type="Rhea" id="RHEA:24793"/>
        <dbReference type="ChEBI" id="CHEBI:15378"/>
        <dbReference type="ChEBI" id="CHEBI:29985"/>
        <dbReference type="ChEBI" id="CHEBI:58278"/>
        <dbReference type="ChEBI" id="CHEBI:58359"/>
        <dbReference type="ChEBI" id="CHEBI:58475"/>
        <dbReference type="ChEBI" id="CHEBI:58525"/>
        <dbReference type="EC" id="4.3.2.10"/>
    </reaction>
</comment>
<comment type="catalytic activity">
    <reaction evidence="1">
        <text>L-glutamine + H2O = L-glutamate + NH4(+)</text>
        <dbReference type="Rhea" id="RHEA:15889"/>
        <dbReference type="ChEBI" id="CHEBI:15377"/>
        <dbReference type="ChEBI" id="CHEBI:28938"/>
        <dbReference type="ChEBI" id="CHEBI:29985"/>
        <dbReference type="ChEBI" id="CHEBI:58359"/>
        <dbReference type="EC" id="3.5.1.2"/>
    </reaction>
</comment>
<comment type="pathway">
    <text evidence="1">Amino-acid biosynthesis; L-histidine biosynthesis; L-histidine from 5-phospho-alpha-D-ribose 1-diphosphate: step 5/9.</text>
</comment>
<comment type="subunit">
    <text evidence="1">Heterodimer of HisH and HisF.</text>
</comment>
<comment type="subcellular location">
    <subcellularLocation>
        <location evidence="1">Cytoplasm</location>
    </subcellularLocation>
</comment>
<gene>
    <name evidence="1" type="primary">hisH</name>
    <name type="ordered locus">LCABL_16530</name>
</gene>
<feature type="chain" id="PRO_1000114783" description="Imidazole glycerol phosphate synthase subunit HisH">
    <location>
        <begin position="1"/>
        <end position="208"/>
    </location>
</feature>
<feature type="domain" description="Glutamine amidotransferase type-1" evidence="1">
    <location>
        <begin position="1"/>
        <end position="206"/>
    </location>
</feature>
<feature type="active site" description="Nucleophile" evidence="1">
    <location>
        <position position="79"/>
    </location>
</feature>
<feature type="active site" evidence="1">
    <location>
        <position position="181"/>
    </location>
</feature>
<feature type="active site" evidence="1">
    <location>
        <position position="183"/>
    </location>
</feature>
<protein>
    <recommendedName>
        <fullName evidence="1">Imidazole glycerol phosphate synthase subunit HisH</fullName>
        <ecNumber evidence="1">4.3.2.10</ecNumber>
    </recommendedName>
    <alternativeName>
        <fullName evidence="1">IGP synthase glutaminase subunit</fullName>
        <ecNumber evidence="1">3.5.1.2</ecNumber>
    </alternativeName>
    <alternativeName>
        <fullName evidence="1">IGP synthase subunit HisH</fullName>
    </alternativeName>
    <alternativeName>
        <fullName evidence="1">ImGP synthase subunit HisH</fullName>
        <shortName evidence="1">IGPS subunit HisH</shortName>
    </alternativeName>
</protein>
<keyword id="KW-0028">Amino-acid biosynthesis</keyword>
<keyword id="KW-0963">Cytoplasm</keyword>
<keyword id="KW-0315">Glutamine amidotransferase</keyword>
<keyword id="KW-0368">Histidine biosynthesis</keyword>
<keyword id="KW-0378">Hydrolase</keyword>
<keyword id="KW-0456">Lyase</keyword>